<keyword id="KW-0963">Cytoplasm</keyword>
<keyword id="KW-0489">Methyltransferase</keyword>
<keyword id="KW-0539">Nucleus</keyword>
<keyword id="KW-1185">Reference proteome</keyword>
<keyword id="KW-0694">RNA-binding</keyword>
<keyword id="KW-0949">S-adenosyl-L-methionine</keyword>
<keyword id="KW-0808">Transferase</keyword>
<organism>
    <name type="scientific">Xenopus laevis</name>
    <name type="common">African clawed frog</name>
    <dbReference type="NCBI Taxonomy" id="8355"/>
    <lineage>
        <taxon>Eukaryota</taxon>
        <taxon>Metazoa</taxon>
        <taxon>Chordata</taxon>
        <taxon>Craniata</taxon>
        <taxon>Vertebrata</taxon>
        <taxon>Euteleostomi</taxon>
        <taxon>Amphibia</taxon>
        <taxon>Batrachia</taxon>
        <taxon>Anura</taxon>
        <taxon>Pipoidea</taxon>
        <taxon>Pipidae</taxon>
        <taxon>Xenopodinae</taxon>
        <taxon>Xenopus</taxon>
        <taxon>Xenopus</taxon>
    </lineage>
</organism>
<protein>
    <recommendedName>
        <fullName evidence="3">RNA N(6)-adenosine-methyltransferase mettl16</fullName>
        <ecNumber evidence="1">2.1.1.348</ecNumber>
    </recommendedName>
    <alternativeName>
        <fullName>Methyltransferase 10 domain-containing protein</fullName>
    </alternativeName>
    <alternativeName>
        <fullName>Methyltransferase-like protein 16</fullName>
    </alternativeName>
    <alternativeName>
        <fullName evidence="1">U6 small nuclear RNA (adenine-(43)-N(6))-methyltransferase</fullName>
        <ecNumber evidence="1">2.1.1.346</ecNumber>
    </alternativeName>
</protein>
<reference key="1">
    <citation type="submission" date="2004-05" db="EMBL/GenBank/DDBJ databases">
        <authorList>
            <consortium name="NIH - Xenopus Gene Collection (XGC) project"/>
        </authorList>
    </citation>
    <scope>NUCLEOTIDE SEQUENCE [LARGE SCALE MRNA]</scope>
    <source>
        <tissue>Ovary</tissue>
    </source>
</reference>
<sequence>MALNKSMHPRNRYKDKPPDFAYLASKYPEFKQHVNVNLAGRVSLNFKDPCAVRALTCTLLKEDFGLTIDIPLERLIPTVPLRLNYIHWVEDLINYHDSDKTALRRGIDIGTGASCIYPLLGATLNGWYFLATEVDDICYNYAKKNVEQNNLSDLIKVVKVPQKTLLMDALKEESEIIYDFCMCNPPFFANQLEAQGVNSRNPHRSPPSSVNTGGITEIMAEGGELEFVKRIIHDSLKLKKRLRWYSCMLGKKCSLAPLKEELRLQGVPKVAHTEFYQGRTMRWALAWSFYEEVIIPNPPKKRKLEKPRKPMVFTVLESVIKLLTEKLPSGSEVPESITLVADCIKKILTDLKVQHKIVPCGRDEESLFLTAVENSWIHIRRKKRDRTRQLRELPRAPNDFLQSNKPDALHKETSDQGQNSGDPPATKESESVTQSETCVPHTSSTPESAAPALSEPMEAENSDSKPDEVCNNDEEQDLGEDMKQSCGEASSAPQGSGSPFLFKCVLNVKKENSDVLVEMHCVEGQNRDLMNQLCTYIRNQIYRLATS</sequence>
<comment type="function">
    <text evidence="1">RNA N6-methyltransferase that methylates adenosine residues at the N(6) position of a subset of RNAs and is involved in S-adenosyl-L-methionine homeostasis by regulating expression of MAT2A transcripts. Able to N6-methylate a subset of mRNAs and U6 small nuclear RNAs (U6 snRNAs). In contrast to the METTL3-METTL14 heterodimer, only able to methylate a limited number of RNAs: requires both a 5'UACAGAGAA-3' nonamer sequence and a specific RNA structure. Plays a key role in S-adenosyl-L-methionine homeostasis by mediating N6-methylation of MAT2A mRNAs, altering splicing of MAT2A transcripts: in presence of S-adenosyl-L-methionine, binds the 3'-UTR region of MAT2A mRNA and specifically N6-methylates the first hairpin of MAT2A mRNA, impairing MAT2A splicing and protein expression. In S-adenosyl-L-methionine-limiting conditions, binds the 3'-UTR region of MAT2A mRNA but stalls due to the lack of a methyl donor, preventing N6-methylation and promoting expression of MAT2A. In addition to mRNAs, also able to mediate N6-methylation of U6 small nuclear RNA (U6 snRNA): specifically N6-methylates adenine in position 43 of U6 snRNAs.</text>
</comment>
<comment type="catalytic activity">
    <reaction evidence="1">
        <text>adenosine in U6 snRNA + S-adenosyl-L-methionine = N(6)-methyladenosine in U6 snRNA + S-adenosyl-L-homocysteine + H(+)</text>
        <dbReference type="Rhea" id="RHEA:52808"/>
        <dbReference type="Rhea" id="RHEA-COMP:13573"/>
        <dbReference type="Rhea" id="RHEA-COMP:13574"/>
        <dbReference type="ChEBI" id="CHEBI:15378"/>
        <dbReference type="ChEBI" id="CHEBI:57856"/>
        <dbReference type="ChEBI" id="CHEBI:59789"/>
        <dbReference type="ChEBI" id="CHEBI:74411"/>
        <dbReference type="ChEBI" id="CHEBI:74449"/>
        <dbReference type="EC" id="2.1.1.346"/>
    </reaction>
</comment>
<comment type="catalytic activity">
    <reaction evidence="1">
        <text>an adenosine in mRNA + S-adenosyl-L-methionine = an N(6)-methyladenosine in mRNA + S-adenosyl-L-homocysteine + H(+)</text>
        <dbReference type="Rhea" id="RHEA:55584"/>
        <dbReference type="Rhea" id="RHEA-COMP:12414"/>
        <dbReference type="Rhea" id="RHEA-COMP:12417"/>
        <dbReference type="ChEBI" id="CHEBI:15378"/>
        <dbReference type="ChEBI" id="CHEBI:57856"/>
        <dbReference type="ChEBI" id="CHEBI:59789"/>
        <dbReference type="ChEBI" id="CHEBI:74411"/>
        <dbReference type="ChEBI" id="CHEBI:74449"/>
        <dbReference type="EC" id="2.1.1.348"/>
    </reaction>
</comment>
<comment type="activity regulation">
    <text evidence="1">Methyltransferase activity is autoinhibited by the K-loop region that blocks S-adenosyl-L-methionine-binding. Upon activation, K-loop changes conformation, allowing S-adenosyl-L-methionine-binding and subsequent methyltransferase activity. mRNA N6-adenosine-methyltransferase activity is inhibited by zinc.</text>
</comment>
<comment type="subcellular location">
    <subcellularLocation>
        <location evidence="1">Nucleus</location>
    </subcellularLocation>
    <subcellularLocation>
        <location evidence="1">Cytoplasm</location>
    </subcellularLocation>
</comment>
<comment type="domain">
    <text evidence="1">The VCR (vertebrate conserved) regions bind the first hairpin of MAT2A mRNAs. The VCR regions interact with the internal stem-loop within U6 snRNAs, inducing the conformational rearrangement of the A43-containing region of U6 snRNA, thereby modifying the RNA structure to become suitable for productive catalysis by the methyltransferase region.</text>
</comment>
<comment type="domain">
    <text evidence="1">The K-loop region occludes the S-adenosyl-L-methionine-binding pocket. Upon activation, conformation of the K-loop changes, allowing S-adenosyl-L-methionine-binding.</text>
</comment>
<comment type="similarity">
    <text evidence="3">Belongs to the methyltransferase superfamily. METTL16/RlmF family.</text>
</comment>
<dbReference type="EC" id="2.1.1.348" evidence="1"/>
<dbReference type="EC" id="2.1.1.346" evidence="1"/>
<dbReference type="EMBL" id="BC071096">
    <property type="protein sequence ID" value="AAH71096.1"/>
    <property type="molecule type" value="mRNA"/>
</dbReference>
<dbReference type="RefSeq" id="NP_001085334.1">
    <property type="nucleotide sequence ID" value="NM_001091865.1"/>
</dbReference>
<dbReference type="SMR" id="Q6GR37"/>
<dbReference type="DNASU" id="443759"/>
<dbReference type="GeneID" id="443759"/>
<dbReference type="KEGG" id="xla:443759"/>
<dbReference type="AGR" id="Xenbase:XB-GENE-952805"/>
<dbReference type="CTD" id="443759"/>
<dbReference type="Xenbase" id="XB-GENE-952805">
    <property type="gene designation" value="mettl16.L"/>
</dbReference>
<dbReference type="OMA" id="TEFCQGH"/>
<dbReference type="OrthoDB" id="514248at2759"/>
<dbReference type="Proteomes" id="UP000186698">
    <property type="component" value="Chromosome 2L"/>
</dbReference>
<dbReference type="Bgee" id="443759">
    <property type="expression patterns" value="Expressed in egg cell and 19 other cell types or tissues"/>
</dbReference>
<dbReference type="GO" id="GO:0005737">
    <property type="term" value="C:cytoplasm"/>
    <property type="evidence" value="ECO:0000250"/>
    <property type="project" value="UniProtKB"/>
</dbReference>
<dbReference type="GO" id="GO:0005634">
    <property type="term" value="C:nucleus"/>
    <property type="evidence" value="ECO:0000250"/>
    <property type="project" value="UniProtKB"/>
</dbReference>
<dbReference type="GO" id="GO:0001734">
    <property type="term" value="F:mRNA m(6)A methyltransferase activity"/>
    <property type="evidence" value="ECO:0000250"/>
    <property type="project" value="UniProtKB"/>
</dbReference>
<dbReference type="GO" id="GO:0003723">
    <property type="term" value="F:RNA binding"/>
    <property type="evidence" value="ECO:0000250"/>
    <property type="project" value="UniProtKB"/>
</dbReference>
<dbReference type="GO" id="GO:0035613">
    <property type="term" value="F:RNA stem-loop binding"/>
    <property type="evidence" value="ECO:0000250"/>
    <property type="project" value="UniProtKB"/>
</dbReference>
<dbReference type="GO" id="GO:0120048">
    <property type="term" value="F:U6 snRNA (adenine-(43)-N(6))-methyltransferase activity"/>
    <property type="evidence" value="ECO:0000250"/>
    <property type="project" value="UniProtKB"/>
</dbReference>
<dbReference type="GO" id="GO:0030629">
    <property type="term" value="F:U6 snRNA 3'-end binding"/>
    <property type="evidence" value="ECO:0000250"/>
    <property type="project" value="UniProtKB"/>
</dbReference>
<dbReference type="GO" id="GO:0006402">
    <property type="term" value="P:mRNA catabolic process"/>
    <property type="evidence" value="ECO:0000250"/>
    <property type="project" value="UniProtKB"/>
</dbReference>
<dbReference type="GO" id="GO:0061157">
    <property type="term" value="P:mRNA destabilization"/>
    <property type="evidence" value="ECO:0000250"/>
    <property type="project" value="UniProtKB"/>
</dbReference>
<dbReference type="GO" id="GO:0006397">
    <property type="term" value="P:mRNA processing"/>
    <property type="evidence" value="ECO:0000250"/>
    <property type="project" value="UniProtKB"/>
</dbReference>
<dbReference type="GO" id="GO:0010608">
    <property type="term" value="P:post-transcriptional regulation of gene expression"/>
    <property type="evidence" value="ECO:0000250"/>
    <property type="project" value="UniProtKB"/>
</dbReference>
<dbReference type="GO" id="GO:0048024">
    <property type="term" value="P:regulation of mRNA splicing, via spliceosome"/>
    <property type="evidence" value="ECO:0000250"/>
    <property type="project" value="UniProtKB"/>
</dbReference>
<dbReference type="GO" id="GO:0070475">
    <property type="term" value="P:rRNA base methylation"/>
    <property type="evidence" value="ECO:0000318"/>
    <property type="project" value="GO_Central"/>
</dbReference>
<dbReference type="GO" id="GO:0006556">
    <property type="term" value="P:S-adenosylmethionine biosynthetic process"/>
    <property type="evidence" value="ECO:0000250"/>
    <property type="project" value="UniProtKB"/>
</dbReference>
<dbReference type="GO" id="GO:0120049">
    <property type="term" value="P:snRNA (adenine-N6)-methylation"/>
    <property type="evidence" value="ECO:0000250"/>
    <property type="project" value="UniProtKB"/>
</dbReference>
<dbReference type="CDD" id="cd02440">
    <property type="entry name" value="AdoMet_MTases"/>
    <property type="match status" value="1"/>
</dbReference>
<dbReference type="FunFam" id="3.40.50.150:FF:000062">
    <property type="entry name" value="U6 small nuclear RNA (adenine-(43)-N(6))-methyltransferase"/>
    <property type="match status" value="1"/>
</dbReference>
<dbReference type="Gene3D" id="3.40.50.150">
    <property type="entry name" value="Vaccinia Virus protein VP39"/>
    <property type="match status" value="1"/>
</dbReference>
<dbReference type="InterPro" id="IPR017182">
    <property type="entry name" value="METTL16/PsiM"/>
</dbReference>
<dbReference type="InterPro" id="IPR010286">
    <property type="entry name" value="METTL16/RlmF"/>
</dbReference>
<dbReference type="InterPro" id="IPR029063">
    <property type="entry name" value="SAM-dependent_MTases_sf"/>
</dbReference>
<dbReference type="PANTHER" id="PTHR13393:SF0">
    <property type="entry name" value="RNA N6-ADENOSINE-METHYLTRANSFERASE METTL16"/>
    <property type="match status" value="1"/>
</dbReference>
<dbReference type="PANTHER" id="PTHR13393">
    <property type="entry name" value="SAM-DEPENDENT METHYLTRANSFERASE"/>
    <property type="match status" value="1"/>
</dbReference>
<dbReference type="Pfam" id="PF05971">
    <property type="entry name" value="Methyltransf_10"/>
    <property type="match status" value="1"/>
</dbReference>
<dbReference type="PIRSF" id="PIRSF037350">
    <property type="entry name" value="Mtase_ZK1128_prd"/>
    <property type="match status" value="1"/>
</dbReference>
<dbReference type="SUPFAM" id="SSF53335">
    <property type="entry name" value="S-adenosyl-L-methionine-dependent methyltransferases"/>
    <property type="match status" value="1"/>
</dbReference>
<accession>Q6GR37</accession>
<proteinExistence type="evidence at transcript level"/>
<evidence type="ECO:0000250" key="1">
    <source>
        <dbReference type="UniProtKB" id="Q86W50"/>
    </source>
</evidence>
<evidence type="ECO:0000256" key="2">
    <source>
        <dbReference type="SAM" id="MobiDB-lite"/>
    </source>
</evidence>
<evidence type="ECO:0000305" key="3"/>
<name>MET16_XENLA</name>
<gene>
    <name type="primary">mettl16</name>
    <name type="synonym">mett10d</name>
</gene>
<feature type="chain" id="PRO_0000310771" description="RNA N(6)-adenosine-methyltransferase mettl16">
    <location>
        <begin position="1"/>
        <end position="547"/>
    </location>
</feature>
<feature type="region of interest" description="RNA-binding" evidence="1">
    <location>
        <begin position="17"/>
        <end position="20"/>
    </location>
</feature>
<feature type="region of interest" description="K-loop" evidence="1">
    <location>
        <begin position="163"/>
        <end position="167"/>
    </location>
</feature>
<feature type="region of interest" description="RNA-binding" evidence="1">
    <location>
        <begin position="199"/>
        <end position="211"/>
    </location>
</feature>
<feature type="region of interest" description="RNA-binding" evidence="1">
    <location>
        <begin position="250"/>
        <end position="254"/>
    </location>
</feature>
<feature type="region of interest" description="RNA-binding" evidence="1">
    <location>
        <begin position="277"/>
        <end position="283"/>
    </location>
</feature>
<feature type="region of interest" description="VCR 1" evidence="1">
    <location>
        <begin position="289"/>
        <end position="398"/>
    </location>
</feature>
<feature type="region of interest" description="Disordered" evidence="2">
    <location>
        <begin position="383"/>
        <end position="473"/>
    </location>
</feature>
<feature type="region of interest" description="VCR 2" evidence="1">
    <location>
        <begin position="500"/>
        <end position="547"/>
    </location>
</feature>
<feature type="compositionally biased region" description="Polar residues" evidence="2">
    <location>
        <begin position="431"/>
        <end position="447"/>
    </location>
</feature>
<feature type="binding site" evidence="1">
    <location>
        <position position="82"/>
    </location>
    <ligand>
        <name>S-adenosyl-L-methionine</name>
        <dbReference type="ChEBI" id="CHEBI:59789"/>
    </ligand>
</feature>
<feature type="binding site" evidence="1">
    <location>
        <position position="110"/>
    </location>
    <ligand>
        <name>S-adenosyl-L-methionine</name>
        <dbReference type="ChEBI" id="CHEBI:59789"/>
    </ligand>
</feature>
<feature type="binding site" evidence="1">
    <location>
        <position position="114"/>
    </location>
    <ligand>
        <name>S-adenosyl-L-methionine</name>
        <dbReference type="ChEBI" id="CHEBI:59789"/>
    </ligand>
</feature>
<feature type="binding site" evidence="1">
    <location>
        <position position="133"/>
    </location>
    <ligand>
        <name>S-adenosyl-L-methionine</name>
        <dbReference type="ChEBI" id="CHEBI:59789"/>
    </ligand>
</feature>
<feature type="binding site" evidence="1">
    <location>
        <position position="164"/>
    </location>
    <ligand>
        <name>S-adenosyl-L-methionine</name>
        <dbReference type="ChEBI" id="CHEBI:59789"/>
    </ligand>
</feature>
<feature type="binding site" evidence="1">
    <location>
        <position position="184"/>
    </location>
    <ligand>
        <name>S-adenosyl-L-methionine</name>
        <dbReference type="ChEBI" id="CHEBI:59789"/>
    </ligand>
</feature>